<reference key="1">
    <citation type="journal article" date="2015" name="Proc. Natl. Acad. Sci. U.S.A.">
        <title>Trichodesmium genome maintains abundant, widespread noncoding DNA in situ, despite oligotrophic lifestyle.</title>
        <authorList>
            <person name="Walworth N."/>
            <person name="Pfreundt U."/>
            <person name="Nelson W.C."/>
            <person name="Mincer T."/>
            <person name="Heidelberg J.F."/>
            <person name="Fu F."/>
            <person name="Waterbury J.B."/>
            <person name="Glavina del Rio T."/>
            <person name="Goodwin L."/>
            <person name="Kyrpides N.C."/>
            <person name="Land M.L."/>
            <person name="Woyke T."/>
            <person name="Hutchins D.A."/>
            <person name="Hess W.R."/>
            <person name="Webb E.A."/>
        </authorList>
    </citation>
    <scope>NUCLEOTIDE SEQUENCE [LARGE SCALE GENOMIC DNA]</scope>
    <source>
        <strain>IMS101</strain>
    </source>
</reference>
<proteinExistence type="inferred from homology"/>
<accession>Q10X41</accession>
<feature type="chain" id="PRO_1000022413" description="Pyridoxine 5'-phosphate synthase">
    <location>
        <begin position="1"/>
        <end position="240"/>
    </location>
</feature>
<feature type="active site" description="Proton acceptor" evidence="1">
    <location>
        <position position="43"/>
    </location>
</feature>
<feature type="active site" description="Proton acceptor" evidence="1">
    <location>
        <position position="70"/>
    </location>
</feature>
<feature type="active site" description="Proton donor" evidence="1">
    <location>
        <position position="191"/>
    </location>
</feature>
<feature type="binding site" evidence="1">
    <location>
        <position position="7"/>
    </location>
    <ligand>
        <name>3-amino-2-oxopropyl phosphate</name>
        <dbReference type="ChEBI" id="CHEBI:57279"/>
    </ligand>
</feature>
<feature type="binding site" evidence="1">
    <location>
        <begin position="9"/>
        <end position="10"/>
    </location>
    <ligand>
        <name>1-deoxy-D-xylulose 5-phosphate</name>
        <dbReference type="ChEBI" id="CHEBI:57792"/>
    </ligand>
</feature>
<feature type="binding site" evidence="1">
    <location>
        <position position="18"/>
    </location>
    <ligand>
        <name>3-amino-2-oxopropyl phosphate</name>
        <dbReference type="ChEBI" id="CHEBI:57279"/>
    </ligand>
</feature>
<feature type="binding site" evidence="1">
    <location>
        <position position="45"/>
    </location>
    <ligand>
        <name>1-deoxy-D-xylulose 5-phosphate</name>
        <dbReference type="ChEBI" id="CHEBI:57792"/>
    </ligand>
</feature>
<feature type="binding site" evidence="1">
    <location>
        <position position="50"/>
    </location>
    <ligand>
        <name>1-deoxy-D-xylulose 5-phosphate</name>
        <dbReference type="ChEBI" id="CHEBI:57792"/>
    </ligand>
</feature>
<feature type="binding site" evidence="1">
    <location>
        <position position="100"/>
    </location>
    <ligand>
        <name>1-deoxy-D-xylulose 5-phosphate</name>
        <dbReference type="ChEBI" id="CHEBI:57792"/>
    </ligand>
</feature>
<feature type="binding site" evidence="1">
    <location>
        <position position="192"/>
    </location>
    <ligand>
        <name>3-amino-2-oxopropyl phosphate</name>
        <dbReference type="ChEBI" id="CHEBI:57279"/>
    </ligand>
</feature>
<feature type="binding site" evidence="1">
    <location>
        <begin position="213"/>
        <end position="214"/>
    </location>
    <ligand>
        <name>3-amino-2-oxopropyl phosphate</name>
        <dbReference type="ChEBI" id="CHEBI:57279"/>
    </ligand>
</feature>
<feature type="site" description="Transition state stabilizer" evidence="1">
    <location>
        <position position="151"/>
    </location>
</feature>
<keyword id="KW-0963">Cytoplasm</keyword>
<keyword id="KW-0664">Pyridoxine biosynthesis</keyword>
<keyword id="KW-0808">Transferase</keyword>
<sequence>MPTLGVNIDHVATIRQARQTVEPDPVAAAVLAELAGADGITVHLREDRRHIQERDVHILRQTVQTHLNLEMAPTDEMVAIALEIKPDYITLVPERREEVTTEGGLDVAGNLSQMRKVVAQLQGVGIPVSMFIDPERLQIEASAQIEAKFIELHTGSYAEAKNEATRHKELTILADGCNIAINHGLRVNAGHGLTYENVYSVACLKGMEELNIGHTIVSKAVLVGMERAVREMKLAINGKF</sequence>
<comment type="function">
    <text evidence="1">Catalyzes the complicated ring closure reaction between the two acyclic compounds 1-deoxy-D-xylulose-5-phosphate (DXP) and 3-amino-2-oxopropyl phosphate (1-amino-acetone-3-phosphate or AAP) to form pyridoxine 5'-phosphate (PNP) and inorganic phosphate.</text>
</comment>
<comment type="catalytic activity">
    <reaction evidence="1">
        <text>3-amino-2-oxopropyl phosphate + 1-deoxy-D-xylulose 5-phosphate = pyridoxine 5'-phosphate + phosphate + 2 H2O + H(+)</text>
        <dbReference type="Rhea" id="RHEA:15265"/>
        <dbReference type="ChEBI" id="CHEBI:15377"/>
        <dbReference type="ChEBI" id="CHEBI:15378"/>
        <dbReference type="ChEBI" id="CHEBI:43474"/>
        <dbReference type="ChEBI" id="CHEBI:57279"/>
        <dbReference type="ChEBI" id="CHEBI:57792"/>
        <dbReference type="ChEBI" id="CHEBI:58589"/>
        <dbReference type="EC" id="2.6.99.2"/>
    </reaction>
</comment>
<comment type="pathway">
    <text evidence="1">Cofactor biosynthesis; pyridoxine 5'-phosphate biosynthesis; pyridoxine 5'-phosphate from D-erythrose 4-phosphate: step 5/5.</text>
</comment>
<comment type="subunit">
    <text evidence="1">Homooctamer; tetramer of dimers.</text>
</comment>
<comment type="subcellular location">
    <subcellularLocation>
        <location evidence="1">Cytoplasm</location>
    </subcellularLocation>
</comment>
<comment type="similarity">
    <text evidence="1">Belongs to the PNP synthase family.</text>
</comment>
<name>PDXJ_TRIEI</name>
<protein>
    <recommendedName>
        <fullName evidence="1">Pyridoxine 5'-phosphate synthase</fullName>
        <shortName evidence="1">PNP synthase</shortName>
        <ecNumber evidence="1">2.6.99.2</ecNumber>
    </recommendedName>
</protein>
<dbReference type="EC" id="2.6.99.2" evidence="1"/>
<dbReference type="EMBL" id="CP000393">
    <property type="protein sequence ID" value="ABG53183.1"/>
    <property type="molecule type" value="Genomic_DNA"/>
</dbReference>
<dbReference type="RefSeq" id="WP_011613513.1">
    <property type="nucleotide sequence ID" value="NC_008312.1"/>
</dbReference>
<dbReference type="SMR" id="Q10X41"/>
<dbReference type="STRING" id="203124.Tery_4177"/>
<dbReference type="KEGG" id="ter:Tery_4177"/>
<dbReference type="eggNOG" id="COG0854">
    <property type="taxonomic scope" value="Bacteria"/>
</dbReference>
<dbReference type="HOGENOM" id="CLU_074563_0_0_3"/>
<dbReference type="OrthoDB" id="9806590at2"/>
<dbReference type="UniPathway" id="UPA00244">
    <property type="reaction ID" value="UER00313"/>
</dbReference>
<dbReference type="GO" id="GO:0005829">
    <property type="term" value="C:cytosol"/>
    <property type="evidence" value="ECO:0007669"/>
    <property type="project" value="TreeGrafter"/>
</dbReference>
<dbReference type="GO" id="GO:0033856">
    <property type="term" value="F:pyridoxine 5'-phosphate synthase activity"/>
    <property type="evidence" value="ECO:0007669"/>
    <property type="project" value="UniProtKB-EC"/>
</dbReference>
<dbReference type="GO" id="GO:0008615">
    <property type="term" value="P:pyridoxine biosynthetic process"/>
    <property type="evidence" value="ECO:0007669"/>
    <property type="project" value="UniProtKB-UniRule"/>
</dbReference>
<dbReference type="CDD" id="cd00003">
    <property type="entry name" value="PNPsynthase"/>
    <property type="match status" value="1"/>
</dbReference>
<dbReference type="Gene3D" id="3.20.20.70">
    <property type="entry name" value="Aldolase class I"/>
    <property type="match status" value="1"/>
</dbReference>
<dbReference type="HAMAP" id="MF_00279">
    <property type="entry name" value="PdxJ"/>
    <property type="match status" value="1"/>
</dbReference>
<dbReference type="InterPro" id="IPR013785">
    <property type="entry name" value="Aldolase_TIM"/>
</dbReference>
<dbReference type="InterPro" id="IPR004569">
    <property type="entry name" value="PyrdxlP_synth_PdxJ"/>
</dbReference>
<dbReference type="InterPro" id="IPR036130">
    <property type="entry name" value="Pyridoxine-5'_phos_synth"/>
</dbReference>
<dbReference type="NCBIfam" id="TIGR00559">
    <property type="entry name" value="pdxJ"/>
    <property type="match status" value="1"/>
</dbReference>
<dbReference type="NCBIfam" id="NF003623">
    <property type="entry name" value="PRK05265.1-1"/>
    <property type="match status" value="1"/>
</dbReference>
<dbReference type="NCBIfam" id="NF003625">
    <property type="entry name" value="PRK05265.1-3"/>
    <property type="match status" value="1"/>
</dbReference>
<dbReference type="NCBIfam" id="NF003627">
    <property type="entry name" value="PRK05265.1-5"/>
    <property type="match status" value="1"/>
</dbReference>
<dbReference type="PANTHER" id="PTHR30456">
    <property type="entry name" value="PYRIDOXINE 5'-PHOSPHATE SYNTHASE"/>
    <property type="match status" value="1"/>
</dbReference>
<dbReference type="PANTHER" id="PTHR30456:SF0">
    <property type="entry name" value="PYRIDOXINE 5'-PHOSPHATE SYNTHASE"/>
    <property type="match status" value="1"/>
</dbReference>
<dbReference type="Pfam" id="PF03740">
    <property type="entry name" value="PdxJ"/>
    <property type="match status" value="1"/>
</dbReference>
<dbReference type="SUPFAM" id="SSF63892">
    <property type="entry name" value="Pyridoxine 5'-phosphate synthase"/>
    <property type="match status" value="1"/>
</dbReference>
<gene>
    <name evidence="1" type="primary">pdxJ</name>
    <name type="ordered locus">Tery_4177</name>
</gene>
<organism>
    <name type="scientific">Trichodesmium erythraeum (strain IMS101)</name>
    <dbReference type="NCBI Taxonomy" id="203124"/>
    <lineage>
        <taxon>Bacteria</taxon>
        <taxon>Bacillati</taxon>
        <taxon>Cyanobacteriota</taxon>
        <taxon>Cyanophyceae</taxon>
        <taxon>Oscillatoriophycideae</taxon>
        <taxon>Oscillatoriales</taxon>
        <taxon>Microcoleaceae</taxon>
        <taxon>Trichodesmium</taxon>
    </lineage>
</organism>
<evidence type="ECO:0000255" key="1">
    <source>
        <dbReference type="HAMAP-Rule" id="MF_00279"/>
    </source>
</evidence>